<name>CH10_GEMAT</name>
<accession>C1A8L7</accession>
<proteinExistence type="inferred from homology"/>
<sequence>MANQKVAPLADRVVVKPLEEAEQMRGGLYIPDTAKEKPQQGTVVAVGPGRFEKETRVPMDVKVGDKILYGKYSGTEVTIEGEALLILRESDVLAVIN</sequence>
<gene>
    <name evidence="1" type="primary">groES</name>
    <name evidence="1" type="synonym">groS</name>
    <name type="ordered locus">GAU_1535</name>
</gene>
<organism>
    <name type="scientific">Gemmatimonas aurantiaca (strain DSM 14586 / JCM 11422 / NBRC 100505 / T-27)</name>
    <dbReference type="NCBI Taxonomy" id="379066"/>
    <lineage>
        <taxon>Bacteria</taxon>
        <taxon>Pseudomonadati</taxon>
        <taxon>Gemmatimonadota</taxon>
        <taxon>Gemmatimonadia</taxon>
        <taxon>Gemmatimonadales</taxon>
        <taxon>Gemmatimonadaceae</taxon>
        <taxon>Gemmatimonas</taxon>
    </lineage>
</organism>
<protein>
    <recommendedName>
        <fullName evidence="1">Co-chaperonin GroES</fullName>
    </recommendedName>
    <alternativeName>
        <fullName evidence="1">10 kDa chaperonin</fullName>
    </alternativeName>
    <alternativeName>
        <fullName evidence="1">Chaperonin-10</fullName>
        <shortName evidence="1">Cpn10</shortName>
    </alternativeName>
</protein>
<dbReference type="EMBL" id="AP009153">
    <property type="protein sequence ID" value="BAH38577.1"/>
    <property type="molecule type" value="Genomic_DNA"/>
</dbReference>
<dbReference type="RefSeq" id="WP_012683024.1">
    <property type="nucleotide sequence ID" value="NC_012489.1"/>
</dbReference>
<dbReference type="SMR" id="C1A8L7"/>
<dbReference type="STRING" id="379066.GAU_1535"/>
<dbReference type="KEGG" id="gau:GAU_1535"/>
<dbReference type="eggNOG" id="COG0234">
    <property type="taxonomic scope" value="Bacteria"/>
</dbReference>
<dbReference type="HOGENOM" id="CLU_132825_2_0_0"/>
<dbReference type="OrthoDB" id="9806791at2"/>
<dbReference type="Proteomes" id="UP000002209">
    <property type="component" value="Chromosome"/>
</dbReference>
<dbReference type="GO" id="GO:0005737">
    <property type="term" value="C:cytoplasm"/>
    <property type="evidence" value="ECO:0007669"/>
    <property type="project" value="UniProtKB-SubCell"/>
</dbReference>
<dbReference type="GO" id="GO:0005524">
    <property type="term" value="F:ATP binding"/>
    <property type="evidence" value="ECO:0007669"/>
    <property type="project" value="InterPro"/>
</dbReference>
<dbReference type="GO" id="GO:0046872">
    <property type="term" value="F:metal ion binding"/>
    <property type="evidence" value="ECO:0007669"/>
    <property type="project" value="TreeGrafter"/>
</dbReference>
<dbReference type="GO" id="GO:0044183">
    <property type="term" value="F:protein folding chaperone"/>
    <property type="evidence" value="ECO:0007669"/>
    <property type="project" value="InterPro"/>
</dbReference>
<dbReference type="GO" id="GO:0051087">
    <property type="term" value="F:protein-folding chaperone binding"/>
    <property type="evidence" value="ECO:0007669"/>
    <property type="project" value="TreeGrafter"/>
</dbReference>
<dbReference type="GO" id="GO:0051082">
    <property type="term" value="F:unfolded protein binding"/>
    <property type="evidence" value="ECO:0007669"/>
    <property type="project" value="TreeGrafter"/>
</dbReference>
<dbReference type="GO" id="GO:0051085">
    <property type="term" value="P:chaperone cofactor-dependent protein refolding"/>
    <property type="evidence" value="ECO:0007669"/>
    <property type="project" value="TreeGrafter"/>
</dbReference>
<dbReference type="CDD" id="cd00320">
    <property type="entry name" value="cpn10"/>
    <property type="match status" value="1"/>
</dbReference>
<dbReference type="FunFam" id="2.30.33.40:FF:000001">
    <property type="entry name" value="10 kDa chaperonin"/>
    <property type="match status" value="1"/>
</dbReference>
<dbReference type="Gene3D" id="2.30.33.40">
    <property type="entry name" value="GroES chaperonin"/>
    <property type="match status" value="1"/>
</dbReference>
<dbReference type="HAMAP" id="MF_00580">
    <property type="entry name" value="CH10"/>
    <property type="match status" value="1"/>
</dbReference>
<dbReference type="InterPro" id="IPR020818">
    <property type="entry name" value="Chaperonin_GroES"/>
</dbReference>
<dbReference type="InterPro" id="IPR037124">
    <property type="entry name" value="Chaperonin_GroES_sf"/>
</dbReference>
<dbReference type="InterPro" id="IPR018369">
    <property type="entry name" value="Chaprnonin_Cpn10_CS"/>
</dbReference>
<dbReference type="InterPro" id="IPR011032">
    <property type="entry name" value="GroES-like_sf"/>
</dbReference>
<dbReference type="NCBIfam" id="NF001531">
    <property type="entry name" value="PRK00364.2-2"/>
    <property type="match status" value="1"/>
</dbReference>
<dbReference type="NCBIfam" id="NF001533">
    <property type="entry name" value="PRK00364.2-4"/>
    <property type="match status" value="1"/>
</dbReference>
<dbReference type="PANTHER" id="PTHR10772">
    <property type="entry name" value="10 KDA HEAT SHOCK PROTEIN"/>
    <property type="match status" value="1"/>
</dbReference>
<dbReference type="PANTHER" id="PTHR10772:SF58">
    <property type="entry name" value="CO-CHAPERONIN GROES"/>
    <property type="match status" value="1"/>
</dbReference>
<dbReference type="Pfam" id="PF00166">
    <property type="entry name" value="Cpn10"/>
    <property type="match status" value="1"/>
</dbReference>
<dbReference type="PRINTS" id="PR00297">
    <property type="entry name" value="CHAPERONIN10"/>
</dbReference>
<dbReference type="SMART" id="SM00883">
    <property type="entry name" value="Cpn10"/>
    <property type="match status" value="1"/>
</dbReference>
<dbReference type="SUPFAM" id="SSF50129">
    <property type="entry name" value="GroES-like"/>
    <property type="match status" value="1"/>
</dbReference>
<dbReference type="PROSITE" id="PS00681">
    <property type="entry name" value="CHAPERONINS_CPN10"/>
    <property type="match status" value="1"/>
</dbReference>
<comment type="function">
    <text evidence="1">Together with the chaperonin GroEL, plays an essential role in assisting protein folding. The GroEL-GroES system forms a nano-cage that allows encapsulation of the non-native substrate proteins and provides a physical environment optimized to promote and accelerate protein folding. GroES binds to the apical surface of the GroEL ring, thereby capping the opening of the GroEL channel.</text>
</comment>
<comment type="subunit">
    <text evidence="1">Heptamer of 7 subunits arranged in a ring. Interacts with the chaperonin GroEL.</text>
</comment>
<comment type="subcellular location">
    <subcellularLocation>
        <location evidence="1">Cytoplasm</location>
    </subcellularLocation>
</comment>
<comment type="similarity">
    <text evidence="1">Belongs to the GroES chaperonin family.</text>
</comment>
<reference key="1">
    <citation type="submission" date="2006-03" db="EMBL/GenBank/DDBJ databases">
        <title>Complete genome sequence of Gemmatimonas aurantiaca T-27 that represents a novel phylum Gemmatimonadetes.</title>
        <authorList>
            <person name="Takasaki K."/>
            <person name="Ichikawa N."/>
            <person name="Miura H."/>
            <person name="Matsushita S."/>
            <person name="Watanabe Y."/>
            <person name="Oguchi A."/>
            <person name="Ankai A."/>
            <person name="Yashiro I."/>
            <person name="Takahashi M."/>
            <person name="Terui Y."/>
            <person name="Fukui S."/>
            <person name="Yokoyama H."/>
            <person name="Tanikawa S."/>
            <person name="Hanada S."/>
            <person name="Kamagata Y."/>
            <person name="Fujita N."/>
        </authorList>
    </citation>
    <scope>NUCLEOTIDE SEQUENCE [LARGE SCALE GENOMIC DNA]</scope>
    <source>
        <strain>DSM 14586 / JCM 11422 / NBRC 100505 / T-27</strain>
    </source>
</reference>
<feature type="chain" id="PRO_1000212115" description="Co-chaperonin GroES">
    <location>
        <begin position="1"/>
        <end position="97"/>
    </location>
</feature>
<evidence type="ECO:0000255" key="1">
    <source>
        <dbReference type="HAMAP-Rule" id="MF_00580"/>
    </source>
</evidence>
<keyword id="KW-0143">Chaperone</keyword>
<keyword id="KW-0963">Cytoplasm</keyword>
<keyword id="KW-1185">Reference proteome</keyword>